<dbReference type="EC" id="2.1.1.176" evidence="1"/>
<dbReference type="EMBL" id="CP000653">
    <property type="protein sequence ID" value="ABP62377.1"/>
    <property type="molecule type" value="Genomic_DNA"/>
</dbReference>
<dbReference type="RefSeq" id="WP_015960698.1">
    <property type="nucleotide sequence ID" value="NC_009436.1"/>
</dbReference>
<dbReference type="SMR" id="A4WF97"/>
<dbReference type="STRING" id="399742.Ent638_3720"/>
<dbReference type="KEGG" id="ent:Ent638_3720"/>
<dbReference type="eggNOG" id="COG0144">
    <property type="taxonomic scope" value="Bacteria"/>
</dbReference>
<dbReference type="eggNOG" id="COG0781">
    <property type="taxonomic scope" value="Bacteria"/>
</dbReference>
<dbReference type="HOGENOM" id="CLU_005316_0_4_6"/>
<dbReference type="OrthoDB" id="9810297at2"/>
<dbReference type="Proteomes" id="UP000000230">
    <property type="component" value="Chromosome"/>
</dbReference>
<dbReference type="GO" id="GO:0005829">
    <property type="term" value="C:cytosol"/>
    <property type="evidence" value="ECO:0007669"/>
    <property type="project" value="TreeGrafter"/>
</dbReference>
<dbReference type="GO" id="GO:0003723">
    <property type="term" value="F:RNA binding"/>
    <property type="evidence" value="ECO:0007669"/>
    <property type="project" value="UniProtKB-KW"/>
</dbReference>
<dbReference type="GO" id="GO:0009383">
    <property type="term" value="F:rRNA (cytosine-C5-)-methyltransferase activity"/>
    <property type="evidence" value="ECO:0007669"/>
    <property type="project" value="TreeGrafter"/>
</dbReference>
<dbReference type="GO" id="GO:0006355">
    <property type="term" value="P:regulation of DNA-templated transcription"/>
    <property type="evidence" value="ECO:0007669"/>
    <property type="project" value="InterPro"/>
</dbReference>
<dbReference type="GO" id="GO:0070475">
    <property type="term" value="P:rRNA base methylation"/>
    <property type="evidence" value="ECO:0007669"/>
    <property type="project" value="TreeGrafter"/>
</dbReference>
<dbReference type="CDD" id="cd02440">
    <property type="entry name" value="AdoMet_MTases"/>
    <property type="match status" value="1"/>
</dbReference>
<dbReference type="CDD" id="cd00620">
    <property type="entry name" value="Methyltransferase_Sun"/>
    <property type="match status" value="1"/>
</dbReference>
<dbReference type="FunFam" id="1.10.287.730:FF:000001">
    <property type="entry name" value="Ribosomal RNA small subunit methyltransferase B"/>
    <property type="match status" value="1"/>
</dbReference>
<dbReference type="FunFam" id="1.10.940.10:FF:000002">
    <property type="entry name" value="Ribosomal RNA small subunit methyltransferase B"/>
    <property type="match status" value="1"/>
</dbReference>
<dbReference type="FunFam" id="3.30.70.1170:FF:000002">
    <property type="entry name" value="Ribosomal RNA small subunit methyltransferase B"/>
    <property type="match status" value="1"/>
</dbReference>
<dbReference type="FunFam" id="3.40.50.150:FF:000022">
    <property type="entry name" value="Ribosomal RNA small subunit methyltransferase B"/>
    <property type="match status" value="1"/>
</dbReference>
<dbReference type="Gene3D" id="1.10.287.730">
    <property type="entry name" value="Helix hairpin bin"/>
    <property type="match status" value="1"/>
</dbReference>
<dbReference type="Gene3D" id="1.10.940.10">
    <property type="entry name" value="NusB-like"/>
    <property type="match status" value="1"/>
</dbReference>
<dbReference type="Gene3D" id="3.30.70.1170">
    <property type="entry name" value="Sun protein, domain 3"/>
    <property type="match status" value="1"/>
</dbReference>
<dbReference type="Gene3D" id="3.40.50.150">
    <property type="entry name" value="Vaccinia Virus protein VP39"/>
    <property type="match status" value="1"/>
</dbReference>
<dbReference type="HAMAP" id="MF_01856">
    <property type="entry name" value="16SrRNA_methyltr_B"/>
    <property type="match status" value="1"/>
</dbReference>
<dbReference type="InterPro" id="IPR049560">
    <property type="entry name" value="MeTrfase_RsmB-F_NOP2_cat"/>
</dbReference>
<dbReference type="InterPro" id="IPR001678">
    <property type="entry name" value="MeTrfase_RsmB-F_NOP2_dom"/>
</dbReference>
<dbReference type="InterPro" id="IPR035926">
    <property type="entry name" value="NusB-like_sf"/>
</dbReference>
<dbReference type="InterPro" id="IPR006027">
    <property type="entry name" value="NusB_RsmB_TIM44"/>
</dbReference>
<dbReference type="InterPro" id="IPR023267">
    <property type="entry name" value="RCMT"/>
</dbReference>
<dbReference type="InterPro" id="IPR004573">
    <property type="entry name" value="rRNA_ssu_MeTfrase_B"/>
</dbReference>
<dbReference type="InterPro" id="IPR023541">
    <property type="entry name" value="rRNA_ssu_MeTfrase_B_ent"/>
</dbReference>
<dbReference type="InterPro" id="IPR054728">
    <property type="entry name" value="RsmB-like_ferredoxin"/>
</dbReference>
<dbReference type="InterPro" id="IPR048019">
    <property type="entry name" value="RsmB-like_N"/>
</dbReference>
<dbReference type="InterPro" id="IPR018314">
    <property type="entry name" value="RsmB/NOL1/NOP2-like_CS"/>
</dbReference>
<dbReference type="InterPro" id="IPR029063">
    <property type="entry name" value="SAM-dependent_MTases_sf"/>
</dbReference>
<dbReference type="NCBIfam" id="NF008149">
    <property type="entry name" value="PRK10901.1"/>
    <property type="match status" value="1"/>
</dbReference>
<dbReference type="NCBIfam" id="NF011494">
    <property type="entry name" value="PRK14902.1"/>
    <property type="match status" value="1"/>
</dbReference>
<dbReference type="NCBIfam" id="TIGR00563">
    <property type="entry name" value="rsmB"/>
    <property type="match status" value="1"/>
</dbReference>
<dbReference type="PANTHER" id="PTHR22807:SF61">
    <property type="entry name" value="NOL1_NOP2_SUN FAMILY PROTEIN _ ANTITERMINATION NUSB DOMAIN-CONTAINING PROTEIN"/>
    <property type="match status" value="1"/>
</dbReference>
<dbReference type="PANTHER" id="PTHR22807">
    <property type="entry name" value="NOP2 YEAST -RELATED NOL1/NOP2/FMU SUN DOMAIN-CONTAINING"/>
    <property type="match status" value="1"/>
</dbReference>
<dbReference type="Pfam" id="PF01189">
    <property type="entry name" value="Methyltr_RsmB-F"/>
    <property type="match status" value="1"/>
</dbReference>
<dbReference type="Pfam" id="PF01029">
    <property type="entry name" value="NusB"/>
    <property type="match status" value="1"/>
</dbReference>
<dbReference type="Pfam" id="PF22458">
    <property type="entry name" value="RsmF-B_ferredox"/>
    <property type="match status" value="1"/>
</dbReference>
<dbReference type="PRINTS" id="PR02008">
    <property type="entry name" value="RCMTFAMILY"/>
</dbReference>
<dbReference type="SUPFAM" id="SSF48013">
    <property type="entry name" value="NusB-like"/>
    <property type="match status" value="1"/>
</dbReference>
<dbReference type="SUPFAM" id="SSF53335">
    <property type="entry name" value="S-adenosyl-L-methionine-dependent methyltransferases"/>
    <property type="match status" value="1"/>
</dbReference>
<dbReference type="PROSITE" id="PS01153">
    <property type="entry name" value="NOL1_NOP2_SUN"/>
    <property type="match status" value="1"/>
</dbReference>
<dbReference type="PROSITE" id="PS51686">
    <property type="entry name" value="SAM_MT_RSMB_NOP"/>
    <property type="match status" value="1"/>
</dbReference>
<protein>
    <recommendedName>
        <fullName evidence="1">Ribosomal RNA small subunit methyltransferase B</fullName>
        <ecNumber evidence="1">2.1.1.176</ecNumber>
    </recommendedName>
    <alternativeName>
        <fullName evidence="1">16S rRNA m5C967 methyltransferase</fullName>
    </alternativeName>
    <alternativeName>
        <fullName evidence="1">rRNA (cytosine-C(5)-)-methyltransferase RsmB</fullName>
    </alternativeName>
</protein>
<organism>
    <name type="scientific">Enterobacter sp. (strain 638)</name>
    <dbReference type="NCBI Taxonomy" id="399742"/>
    <lineage>
        <taxon>Bacteria</taxon>
        <taxon>Pseudomonadati</taxon>
        <taxon>Pseudomonadota</taxon>
        <taxon>Gammaproteobacteria</taxon>
        <taxon>Enterobacterales</taxon>
        <taxon>Enterobacteriaceae</taxon>
        <taxon>Enterobacter</taxon>
    </lineage>
</organism>
<reference key="1">
    <citation type="journal article" date="2010" name="PLoS Genet.">
        <title>Genome sequence of the plant growth promoting endophytic bacterium Enterobacter sp. 638.</title>
        <authorList>
            <person name="Taghavi S."/>
            <person name="van der Lelie D."/>
            <person name="Hoffman A."/>
            <person name="Zhang Y.B."/>
            <person name="Walla M.D."/>
            <person name="Vangronsveld J."/>
            <person name="Newman L."/>
            <person name="Monchy S."/>
        </authorList>
    </citation>
    <scope>NUCLEOTIDE SEQUENCE [LARGE SCALE GENOMIC DNA]</scope>
    <source>
        <strain>638</strain>
    </source>
</reference>
<proteinExistence type="inferred from homology"/>
<name>RSMB_ENT38</name>
<accession>A4WF97</accession>
<evidence type="ECO:0000255" key="1">
    <source>
        <dbReference type="HAMAP-Rule" id="MF_01856"/>
    </source>
</evidence>
<comment type="function">
    <text evidence="1">Specifically methylates the cytosine at position 967 (m5C967) of 16S rRNA.</text>
</comment>
<comment type="catalytic activity">
    <reaction evidence="1">
        <text>cytidine(967) in 16S rRNA + S-adenosyl-L-methionine = 5-methylcytidine(967) in 16S rRNA + S-adenosyl-L-homocysteine + H(+)</text>
        <dbReference type="Rhea" id="RHEA:42748"/>
        <dbReference type="Rhea" id="RHEA-COMP:10219"/>
        <dbReference type="Rhea" id="RHEA-COMP:10220"/>
        <dbReference type="ChEBI" id="CHEBI:15378"/>
        <dbReference type="ChEBI" id="CHEBI:57856"/>
        <dbReference type="ChEBI" id="CHEBI:59789"/>
        <dbReference type="ChEBI" id="CHEBI:74483"/>
        <dbReference type="ChEBI" id="CHEBI:82748"/>
        <dbReference type="EC" id="2.1.1.176"/>
    </reaction>
</comment>
<comment type="subcellular location">
    <subcellularLocation>
        <location evidence="1">Cytoplasm</location>
    </subcellularLocation>
</comment>
<comment type="similarity">
    <text evidence="1">Belongs to the class I-like SAM-binding methyltransferase superfamily. RsmB/NOP family.</text>
</comment>
<sequence>MKKQNLRSMAASAIEKVVEQGQSLSNILPPLQQKVSDKDKALLQELCFGVLRTLPQQEWLISKLMSRPMTGKQRTIHYLIMVGFYQLLHTRIPPHAALAETVEGAVVIKRPQLKGLINGVLRQFQRQQEELLAEFADSDKRFLHPEWLLKRLQKAYPSKWEAIVEANNQRPPMWLRVNRNHHTRDEWLALLETAEMNGFTHDAYPDAIRLASPAPVQALPGFEQGWVTVQDASAQGCMTYLEPQNGDHILDLCAAPGGKTTHILEIAPKASVMAVDVDEQRLSRVYDNLKRLGMKAEVKQGDGRTPGEWCGDEQFDRILVDAPCSATGVIRRHPDIKWLRRDRDINELAQLQSEILDAVWPHLKPGGTLVYATCSVLPEENSQQIAAFLKRTSNATLRTTGTPDKPGVQNLPGAEDGDGFFYAKLIKE</sequence>
<feature type="chain" id="PRO_0000366148" description="Ribosomal RNA small subunit methyltransferase B">
    <location>
        <begin position="1"/>
        <end position="428"/>
    </location>
</feature>
<feature type="active site" description="Nucleophile" evidence="1">
    <location>
        <position position="374"/>
    </location>
</feature>
<feature type="binding site" evidence="1">
    <location>
        <begin position="253"/>
        <end position="259"/>
    </location>
    <ligand>
        <name>S-adenosyl-L-methionine</name>
        <dbReference type="ChEBI" id="CHEBI:59789"/>
    </ligand>
</feature>
<feature type="binding site" evidence="1">
    <location>
        <position position="276"/>
    </location>
    <ligand>
        <name>S-adenosyl-L-methionine</name>
        <dbReference type="ChEBI" id="CHEBI:59789"/>
    </ligand>
</feature>
<feature type="binding site" evidence="1">
    <location>
        <position position="302"/>
    </location>
    <ligand>
        <name>S-adenosyl-L-methionine</name>
        <dbReference type="ChEBI" id="CHEBI:59789"/>
    </ligand>
</feature>
<feature type="binding site" evidence="1">
    <location>
        <position position="321"/>
    </location>
    <ligand>
        <name>S-adenosyl-L-methionine</name>
        <dbReference type="ChEBI" id="CHEBI:59789"/>
    </ligand>
</feature>
<gene>
    <name evidence="1" type="primary">rsmB</name>
    <name evidence="1" type="synonym">sun</name>
    <name type="ordered locus">Ent638_3720</name>
</gene>
<keyword id="KW-0963">Cytoplasm</keyword>
<keyword id="KW-0489">Methyltransferase</keyword>
<keyword id="KW-0694">RNA-binding</keyword>
<keyword id="KW-0698">rRNA processing</keyword>
<keyword id="KW-0949">S-adenosyl-L-methionine</keyword>
<keyword id="KW-0808">Transferase</keyword>